<evidence type="ECO:0000250" key="1">
    <source>
        <dbReference type="UniProtKB" id="P50389"/>
    </source>
</evidence>
<evidence type="ECO:0000255" key="2">
    <source>
        <dbReference type="HAMAP-Rule" id="MF_01627"/>
    </source>
</evidence>
<feature type="chain" id="PRO_1000186176" description="Purine nucleoside phosphorylase DeoD-type">
    <location>
        <begin position="1"/>
        <end position="235"/>
    </location>
</feature>
<feature type="active site" description="Proton donor" evidence="2">
    <location>
        <position position="204"/>
    </location>
</feature>
<feature type="binding site" evidence="1">
    <location>
        <position position="4"/>
    </location>
    <ligand>
        <name>a purine D-ribonucleoside</name>
        <dbReference type="ChEBI" id="CHEBI:142355"/>
        <note>ligand shared between dimeric partners</note>
    </ligand>
</feature>
<feature type="binding site" description="in other chain" evidence="1">
    <location>
        <position position="20"/>
    </location>
    <ligand>
        <name>phosphate</name>
        <dbReference type="ChEBI" id="CHEBI:43474"/>
        <note>ligand shared between dimeric partners</note>
    </ligand>
</feature>
<feature type="binding site" description="in other chain" evidence="1">
    <location>
        <position position="24"/>
    </location>
    <ligand>
        <name>phosphate</name>
        <dbReference type="ChEBI" id="CHEBI:43474"/>
        <note>ligand shared between dimeric partners</note>
    </ligand>
</feature>
<feature type="binding site" evidence="1">
    <location>
        <position position="43"/>
    </location>
    <ligand>
        <name>phosphate</name>
        <dbReference type="ChEBI" id="CHEBI:43474"/>
        <note>ligand shared between dimeric partners</note>
    </ligand>
</feature>
<feature type="binding site" description="in other chain" evidence="1">
    <location>
        <begin position="87"/>
        <end position="90"/>
    </location>
    <ligand>
        <name>phosphate</name>
        <dbReference type="ChEBI" id="CHEBI:43474"/>
        <note>ligand shared between dimeric partners</note>
    </ligand>
</feature>
<feature type="binding site" description="in other chain" evidence="1">
    <location>
        <position position="162"/>
    </location>
    <ligand>
        <name>a purine D-ribonucleoside</name>
        <dbReference type="ChEBI" id="CHEBI:142355"/>
        <note>ligand shared between dimeric partners</note>
    </ligand>
</feature>
<feature type="binding site" description="in other chain" evidence="1">
    <location>
        <begin position="179"/>
        <end position="181"/>
    </location>
    <ligand>
        <name>a purine D-ribonucleoside</name>
        <dbReference type="ChEBI" id="CHEBI:142355"/>
        <note>ligand shared between dimeric partners</note>
    </ligand>
</feature>
<feature type="binding site" description="in other chain" evidence="1">
    <location>
        <begin position="203"/>
        <end position="204"/>
    </location>
    <ligand>
        <name>a purine D-ribonucleoside</name>
        <dbReference type="ChEBI" id="CHEBI:142355"/>
        <note>ligand shared between dimeric partners</note>
    </ligand>
</feature>
<feature type="site" description="Important for catalytic activity" evidence="2">
    <location>
        <position position="217"/>
    </location>
</feature>
<reference key="1">
    <citation type="submission" date="2008-10" db="EMBL/GenBank/DDBJ databases">
        <title>Genome sequence of Bacillus cereus B4264.</title>
        <authorList>
            <person name="Dodson R.J."/>
            <person name="Durkin A.S."/>
            <person name="Rosovitz M.J."/>
            <person name="Rasko D.A."/>
            <person name="Hoffmaster A."/>
            <person name="Ravel J."/>
            <person name="Sutton G."/>
        </authorList>
    </citation>
    <scope>NUCLEOTIDE SEQUENCE [LARGE SCALE GENOMIC DNA]</scope>
    <source>
        <strain>B4264</strain>
    </source>
</reference>
<dbReference type="EC" id="2.4.2.1" evidence="2"/>
<dbReference type="EMBL" id="CP001176">
    <property type="protein sequence ID" value="ACK59108.1"/>
    <property type="molecule type" value="Genomic_DNA"/>
</dbReference>
<dbReference type="RefSeq" id="WP_000110709.1">
    <property type="nucleotide sequence ID" value="NC_011725.1"/>
</dbReference>
<dbReference type="SMR" id="B7HHL7"/>
<dbReference type="KEGG" id="bcb:BCB4264_A1518"/>
<dbReference type="HOGENOM" id="CLU_068457_2_0_9"/>
<dbReference type="Proteomes" id="UP000007096">
    <property type="component" value="Chromosome"/>
</dbReference>
<dbReference type="GO" id="GO:0005829">
    <property type="term" value="C:cytosol"/>
    <property type="evidence" value="ECO:0007669"/>
    <property type="project" value="TreeGrafter"/>
</dbReference>
<dbReference type="GO" id="GO:0004731">
    <property type="term" value="F:purine-nucleoside phosphorylase activity"/>
    <property type="evidence" value="ECO:0007669"/>
    <property type="project" value="UniProtKB-UniRule"/>
</dbReference>
<dbReference type="GO" id="GO:0006152">
    <property type="term" value="P:purine nucleoside catabolic process"/>
    <property type="evidence" value="ECO:0007669"/>
    <property type="project" value="TreeGrafter"/>
</dbReference>
<dbReference type="CDD" id="cd09006">
    <property type="entry name" value="PNP_EcPNPI-like"/>
    <property type="match status" value="1"/>
</dbReference>
<dbReference type="Gene3D" id="3.40.50.1580">
    <property type="entry name" value="Nucleoside phosphorylase domain"/>
    <property type="match status" value="1"/>
</dbReference>
<dbReference type="HAMAP" id="MF_01627">
    <property type="entry name" value="Pur_nucleosid_phosp"/>
    <property type="match status" value="1"/>
</dbReference>
<dbReference type="InterPro" id="IPR004402">
    <property type="entry name" value="DeoD-type"/>
</dbReference>
<dbReference type="InterPro" id="IPR018016">
    <property type="entry name" value="Nucleoside_phosphorylase_CS"/>
</dbReference>
<dbReference type="InterPro" id="IPR000845">
    <property type="entry name" value="Nucleoside_phosphorylase_d"/>
</dbReference>
<dbReference type="InterPro" id="IPR035994">
    <property type="entry name" value="Nucleoside_phosphorylase_sf"/>
</dbReference>
<dbReference type="NCBIfam" id="TIGR00107">
    <property type="entry name" value="deoD"/>
    <property type="match status" value="1"/>
</dbReference>
<dbReference type="NCBIfam" id="NF004489">
    <property type="entry name" value="PRK05819.1"/>
    <property type="match status" value="1"/>
</dbReference>
<dbReference type="NCBIfam" id="NF009914">
    <property type="entry name" value="PRK13374.1"/>
    <property type="match status" value="1"/>
</dbReference>
<dbReference type="PANTHER" id="PTHR43691:SF11">
    <property type="entry name" value="FI09636P-RELATED"/>
    <property type="match status" value="1"/>
</dbReference>
<dbReference type="PANTHER" id="PTHR43691">
    <property type="entry name" value="URIDINE PHOSPHORYLASE"/>
    <property type="match status" value="1"/>
</dbReference>
<dbReference type="Pfam" id="PF01048">
    <property type="entry name" value="PNP_UDP_1"/>
    <property type="match status" value="1"/>
</dbReference>
<dbReference type="SUPFAM" id="SSF53167">
    <property type="entry name" value="Purine and uridine phosphorylases"/>
    <property type="match status" value="1"/>
</dbReference>
<dbReference type="PROSITE" id="PS01232">
    <property type="entry name" value="PNP_UDP_1"/>
    <property type="match status" value="1"/>
</dbReference>
<keyword id="KW-0328">Glycosyltransferase</keyword>
<keyword id="KW-0808">Transferase</keyword>
<sequence length="235" mass="25705">MSVHIEAKQGEIAESILLPGDPLRAKYIAETFLEDVTCYNNVRGMLGFTGTYKGKRVSVQGTGMGVPSISIYVNELIQSYGVKNLIRVGTCGAIQKDVKVRDVIIAMTACTDSNMNRLTFPGFDFAPTANFDLLKKAYDAGTEKGLHVRVGNVLTADVFYRESMDMVKKLGDYGVLAVEMETTALYTLAAKYGVNALSVLTVSDHIFTGEETTSEERQTTFNEMIEIALDAAIQQ</sequence>
<proteinExistence type="inferred from homology"/>
<gene>
    <name evidence="2" type="primary">deoD</name>
    <name type="ordered locus">BCB4264_A1518</name>
</gene>
<name>DEOD_BACC4</name>
<organism>
    <name type="scientific">Bacillus cereus (strain B4264)</name>
    <dbReference type="NCBI Taxonomy" id="405532"/>
    <lineage>
        <taxon>Bacteria</taxon>
        <taxon>Bacillati</taxon>
        <taxon>Bacillota</taxon>
        <taxon>Bacilli</taxon>
        <taxon>Bacillales</taxon>
        <taxon>Bacillaceae</taxon>
        <taxon>Bacillus</taxon>
        <taxon>Bacillus cereus group</taxon>
    </lineage>
</organism>
<accession>B7HHL7</accession>
<comment type="function">
    <text evidence="2">Catalyzes the reversible phosphorolytic breakdown of the N-glycosidic bond in the beta-(deoxy)ribonucleoside molecules, with the formation of the corresponding free purine bases and pentose-1-phosphate.</text>
</comment>
<comment type="catalytic activity">
    <reaction evidence="2">
        <text>a purine D-ribonucleoside + phosphate = a purine nucleobase + alpha-D-ribose 1-phosphate</text>
        <dbReference type="Rhea" id="RHEA:19805"/>
        <dbReference type="ChEBI" id="CHEBI:26386"/>
        <dbReference type="ChEBI" id="CHEBI:43474"/>
        <dbReference type="ChEBI" id="CHEBI:57720"/>
        <dbReference type="ChEBI" id="CHEBI:142355"/>
        <dbReference type="EC" id="2.4.2.1"/>
    </reaction>
</comment>
<comment type="catalytic activity">
    <reaction evidence="2">
        <text>a purine 2'-deoxy-D-ribonucleoside + phosphate = a purine nucleobase + 2-deoxy-alpha-D-ribose 1-phosphate</text>
        <dbReference type="Rhea" id="RHEA:36431"/>
        <dbReference type="ChEBI" id="CHEBI:26386"/>
        <dbReference type="ChEBI" id="CHEBI:43474"/>
        <dbReference type="ChEBI" id="CHEBI:57259"/>
        <dbReference type="ChEBI" id="CHEBI:142361"/>
        <dbReference type="EC" id="2.4.2.1"/>
    </reaction>
</comment>
<comment type="subunit">
    <text evidence="2">Homohexamer; trimer of homodimers.</text>
</comment>
<comment type="similarity">
    <text evidence="2">Belongs to the PNP/UDP phosphorylase family.</text>
</comment>
<protein>
    <recommendedName>
        <fullName evidence="2">Purine nucleoside phosphorylase DeoD-type</fullName>
        <shortName evidence="2">PNP</shortName>
        <ecNumber evidence="2">2.4.2.1</ecNumber>
    </recommendedName>
</protein>